<reference key="1">
    <citation type="journal article" date="2005" name="Mol. Genet. Genomics">
        <title>A fine physical map of the rice chromosome 5.</title>
        <authorList>
            <person name="Cheng C.-H."/>
            <person name="Chung M.C."/>
            <person name="Liu S.-M."/>
            <person name="Chen S.-K."/>
            <person name="Kao F.Y."/>
            <person name="Lin S.-J."/>
            <person name="Hsiao S.-H."/>
            <person name="Tseng I.C."/>
            <person name="Hsing Y.-I.C."/>
            <person name="Wu H.-P."/>
            <person name="Chen C.-S."/>
            <person name="Shaw J.-F."/>
            <person name="Wu J."/>
            <person name="Matsumoto T."/>
            <person name="Sasaki T."/>
            <person name="Chen H.-C."/>
            <person name="Chow T.-Y."/>
        </authorList>
    </citation>
    <scope>NUCLEOTIDE SEQUENCE [LARGE SCALE GENOMIC DNA]</scope>
    <source>
        <strain>cv. Nipponbare</strain>
    </source>
</reference>
<reference key="2">
    <citation type="journal article" date="2005" name="Nature">
        <title>The map-based sequence of the rice genome.</title>
        <authorList>
            <consortium name="International rice genome sequencing project (IRGSP)"/>
        </authorList>
    </citation>
    <scope>NUCLEOTIDE SEQUENCE [LARGE SCALE GENOMIC DNA]</scope>
    <source>
        <strain>cv. Nipponbare</strain>
    </source>
</reference>
<reference key="3">
    <citation type="journal article" date="2008" name="Nucleic Acids Res.">
        <title>The rice annotation project database (RAP-DB): 2008 update.</title>
        <authorList>
            <consortium name="The rice annotation project (RAP)"/>
        </authorList>
    </citation>
    <scope>GENOME REANNOTATION</scope>
    <source>
        <strain>cv. Nipponbare</strain>
    </source>
</reference>
<reference key="4">
    <citation type="journal article" date="2013" name="Rice">
        <title>Improvement of the Oryza sativa Nipponbare reference genome using next generation sequence and optical map data.</title>
        <authorList>
            <person name="Kawahara Y."/>
            <person name="de la Bastide M."/>
            <person name="Hamilton J.P."/>
            <person name="Kanamori H."/>
            <person name="McCombie W.R."/>
            <person name="Ouyang S."/>
            <person name="Schwartz D.C."/>
            <person name="Tanaka T."/>
            <person name="Wu J."/>
            <person name="Zhou S."/>
            <person name="Childs K.L."/>
            <person name="Davidson R.M."/>
            <person name="Lin H."/>
            <person name="Quesada-Ocampo L."/>
            <person name="Vaillancourt B."/>
            <person name="Sakai H."/>
            <person name="Lee S.S."/>
            <person name="Kim J."/>
            <person name="Numa H."/>
            <person name="Itoh T."/>
            <person name="Buell C.R."/>
            <person name="Matsumoto T."/>
        </authorList>
    </citation>
    <scope>GENOME REANNOTATION</scope>
    <source>
        <strain>cv. Nipponbare</strain>
    </source>
</reference>
<reference key="5">
    <citation type="journal article" date="2005" name="PLoS Biol.">
        <title>The genomes of Oryza sativa: a history of duplications.</title>
        <authorList>
            <person name="Yu J."/>
            <person name="Wang J."/>
            <person name="Lin W."/>
            <person name="Li S."/>
            <person name="Li H."/>
            <person name="Zhou J."/>
            <person name="Ni P."/>
            <person name="Dong W."/>
            <person name="Hu S."/>
            <person name="Zeng C."/>
            <person name="Zhang J."/>
            <person name="Zhang Y."/>
            <person name="Li R."/>
            <person name="Xu Z."/>
            <person name="Li S."/>
            <person name="Li X."/>
            <person name="Zheng H."/>
            <person name="Cong L."/>
            <person name="Lin L."/>
            <person name="Yin J."/>
            <person name="Geng J."/>
            <person name="Li G."/>
            <person name="Shi J."/>
            <person name="Liu J."/>
            <person name="Lv H."/>
            <person name="Li J."/>
            <person name="Wang J."/>
            <person name="Deng Y."/>
            <person name="Ran L."/>
            <person name="Shi X."/>
            <person name="Wang X."/>
            <person name="Wu Q."/>
            <person name="Li C."/>
            <person name="Ren X."/>
            <person name="Wang J."/>
            <person name="Wang X."/>
            <person name="Li D."/>
            <person name="Liu D."/>
            <person name="Zhang X."/>
            <person name="Ji Z."/>
            <person name="Zhao W."/>
            <person name="Sun Y."/>
            <person name="Zhang Z."/>
            <person name="Bao J."/>
            <person name="Han Y."/>
            <person name="Dong L."/>
            <person name="Ji J."/>
            <person name="Chen P."/>
            <person name="Wu S."/>
            <person name="Liu J."/>
            <person name="Xiao Y."/>
            <person name="Bu D."/>
            <person name="Tan J."/>
            <person name="Yang L."/>
            <person name="Ye C."/>
            <person name="Zhang J."/>
            <person name="Xu J."/>
            <person name="Zhou Y."/>
            <person name="Yu Y."/>
            <person name="Zhang B."/>
            <person name="Zhuang S."/>
            <person name="Wei H."/>
            <person name="Liu B."/>
            <person name="Lei M."/>
            <person name="Yu H."/>
            <person name="Li Y."/>
            <person name="Xu H."/>
            <person name="Wei S."/>
            <person name="He X."/>
            <person name="Fang L."/>
            <person name="Zhang Z."/>
            <person name="Zhang Y."/>
            <person name="Huang X."/>
            <person name="Su Z."/>
            <person name="Tong W."/>
            <person name="Li J."/>
            <person name="Tong Z."/>
            <person name="Li S."/>
            <person name="Ye J."/>
            <person name="Wang L."/>
            <person name="Fang L."/>
            <person name="Lei T."/>
            <person name="Chen C.-S."/>
            <person name="Chen H.-C."/>
            <person name="Xu Z."/>
            <person name="Li H."/>
            <person name="Huang H."/>
            <person name="Zhang F."/>
            <person name="Xu H."/>
            <person name="Li N."/>
            <person name="Zhao C."/>
            <person name="Li S."/>
            <person name="Dong L."/>
            <person name="Huang Y."/>
            <person name="Li L."/>
            <person name="Xi Y."/>
            <person name="Qi Q."/>
            <person name="Li W."/>
            <person name="Zhang B."/>
            <person name="Hu W."/>
            <person name="Zhang Y."/>
            <person name="Tian X."/>
            <person name="Jiao Y."/>
            <person name="Liang X."/>
            <person name="Jin J."/>
            <person name="Gao L."/>
            <person name="Zheng W."/>
            <person name="Hao B."/>
            <person name="Liu S.-M."/>
            <person name="Wang W."/>
            <person name="Yuan L."/>
            <person name="Cao M."/>
            <person name="McDermott J."/>
            <person name="Samudrala R."/>
            <person name="Wang J."/>
            <person name="Wong G.K.-S."/>
            <person name="Yang H."/>
        </authorList>
    </citation>
    <scope>NUCLEOTIDE SEQUENCE [LARGE SCALE GENOMIC DNA]</scope>
    <source>
        <strain>cv. Nipponbare</strain>
    </source>
</reference>
<reference key="6">
    <citation type="journal article" date="2003" name="Science">
        <title>Collection, mapping, and annotation of over 28,000 cDNA clones from japonica rice.</title>
        <authorList>
            <consortium name="The rice full-length cDNA consortium"/>
        </authorList>
    </citation>
    <scope>NUCLEOTIDE SEQUENCE [LARGE SCALE MRNA]</scope>
    <source>
        <strain>cv. Nipponbare</strain>
    </source>
</reference>
<keyword id="KW-0274">FAD</keyword>
<keyword id="KW-0285">Flavoprotein</keyword>
<keyword id="KW-0496">Mitochondrion</keyword>
<keyword id="KW-0560">Oxidoreductase</keyword>
<keyword id="KW-1185">Reference proteome</keyword>
<keyword id="KW-0809">Transit peptide</keyword>
<proteinExistence type="evidence at transcript level"/>
<sequence length="409" mass="44531">MAAAQRWLPGILRRGDGLARRLYSSASSLLFDDTQEQFKESVHKFAQETIAPHAAAIDASNHFPKDVNLWKLMGDFNLHGLTAPEEYGGMGLGYMYHCIAMEEISRASGSVGLSYGAHSNLCINQLVRHGSPAQKLKYLPKLISGEHVGALAMSEPNSGSDVVSMKCKAEKVDGGYVINGNKMWCTNGPSAQTLVVYAKTDIAAGSKGITAFIIEKGMPGFSTAQKLDKLGMRGSDTCELVFENCFVPHENVLGEEGKGVYVMMSGLDLERLVLAAGPIGLMQACLDVAVPYVRQREQFGRPIGEFQFIQGKLADMYTSLQSSRSFVYSVARDCDNGKVDRKDCAGVILFAAERATQVALQAIQCLGGNGYINEYPTGRLLRDAKLFEIGAGTSEIRRMIIGRELFKEE</sequence>
<accession>Q75IM9</accession>
<accession>A0A0P0WHF1</accession>
<accession>Q6L4K9</accession>
<organism>
    <name type="scientific">Oryza sativa subsp. japonica</name>
    <name type="common">Rice</name>
    <dbReference type="NCBI Taxonomy" id="39947"/>
    <lineage>
        <taxon>Eukaryota</taxon>
        <taxon>Viridiplantae</taxon>
        <taxon>Streptophyta</taxon>
        <taxon>Embryophyta</taxon>
        <taxon>Tracheophyta</taxon>
        <taxon>Spermatophyta</taxon>
        <taxon>Magnoliopsida</taxon>
        <taxon>Liliopsida</taxon>
        <taxon>Poales</taxon>
        <taxon>Poaceae</taxon>
        <taxon>BOP clade</taxon>
        <taxon>Oryzoideae</taxon>
        <taxon>Oryzeae</taxon>
        <taxon>Oryzinae</taxon>
        <taxon>Oryza</taxon>
        <taxon>Oryza sativa</taxon>
    </lineage>
</organism>
<gene>
    <name type="ordered locus">Os05g0125500</name>
    <name type="ORF">OsJ_16966</name>
    <name type="ORF">OSJNBb0079L11.8</name>
    <name type="ORF">P0683F12.2</name>
</gene>
<feature type="transit peptide" description="Mitochondrion" evidence="3">
    <location>
        <begin position="1"/>
        <end position="22"/>
    </location>
</feature>
<feature type="chain" id="PRO_0000424903" description="Isovaleryl-CoA dehydrogenase, mitochondrial">
    <location>
        <begin position="23"/>
        <end position="409"/>
    </location>
</feature>
<feature type="active site" description="Proton acceptor" evidence="2">
    <location>
        <position position="270"/>
    </location>
</feature>
<feature type="binding site" evidence="2">
    <location>
        <begin position="151"/>
        <end position="160"/>
    </location>
    <ligand>
        <name>FAD</name>
        <dbReference type="ChEBI" id="CHEBI:57692"/>
    </ligand>
</feature>
<feature type="binding site" evidence="2">
    <location>
        <position position="160"/>
    </location>
    <ligand>
        <name>substrate</name>
    </ligand>
</feature>
<feature type="binding site" evidence="2">
    <location>
        <begin position="184"/>
        <end position="186"/>
    </location>
    <ligand>
        <name>FAD</name>
        <dbReference type="ChEBI" id="CHEBI:57692"/>
    </ligand>
</feature>
<feature type="binding site" evidence="2">
    <location>
        <begin position="206"/>
        <end position="207"/>
    </location>
    <ligand>
        <name>substrate</name>
    </ligand>
</feature>
<feature type="binding site" evidence="2">
    <location>
        <position position="261"/>
    </location>
    <ligand>
        <name>substrate</name>
    </ligand>
</feature>
<feature type="binding site" evidence="2">
    <location>
        <begin position="268"/>
        <end position="271"/>
    </location>
    <ligand>
        <name>substrate</name>
    </ligand>
</feature>
<feature type="binding site" evidence="2">
    <location>
        <position position="296"/>
    </location>
    <ligand>
        <name>FAD</name>
        <dbReference type="ChEBI" id="CHEBI:57692"/>
    </ligand>
</feature>
<feature type="binding site" evidence="2">
    <location>
        <position position="307"/>
    </location>
    <ligand>
        <name>FAD</name>
        <dbReference type="ChEBI" id="CHEBI:57692"/>
    </ligand>
</feature>
<feature type="binding site" evidence="2">
    <location>
        <begin position="364"/>
        <end position="368"/>
    </location>
    <ligand>
        <name>FAD</name>
        <dbReference type="ChEBI" id="CHEBI:57692"/>
    </ligand>
</feature>
<feature type="binding site" evidence="2">
    <location>
        <begin position="391"/>
        <end position="392"/>
    </location>
    <ligand>
        <name>substrate</name>
    </ligand>
</feature>
<feature type="binding site" evidence="2">
    <location>
        <begin position="393"/>
        <end position="395"/>
    </location>
    <ligand>
        <name>FAD</name>
        <dbReference type="ChEBI" id="CHEBI:57692"/>
    </ligand>
</feature>
<protein>
    <recommendedName>
        <fullName>Isovaleryl-CoA dehydrogenase, mitochondrial</fullName>
        <shortName>IVD</shortName>
        <ecNumber>1.3.8.4</ecNumber>
    </recommendedName>
</protein>
<comment type="catalytic activity">
    <reaction>
        <text>3-methylbutanoyl-CoA + oxidized [electron-transfer flavoprotein] + H(+) = 3-methylbut-2-enoyl-CoA + reduced [electron-transfer flavoprotein]</text>
        <dbReference type="Rhea" id="RHEA:12276"/>
        <dbReference type="Rhea" id="RHEA-COMP:10685"/>
        <dbReference type="Rhea" id="RHEA-COMP:10686"/>
        <dbReference type="ChEBI" id="CHEBI:15378"/>
        <dbReference type="ChEBI" id="CHEBI:57344"/>
        <dbReference type="ChEBI" id="CHEBI:57345"/>
        <dbReference type="ChEBI" id="CHEBI:57692"/>
        <dbReference type="ChEBI" id="CHEBI:58307"/>
        <dbReference type="EC" id="1.3.8.4"/>
    </reaction>
</comment>
<comment type="cofactor">
    <cofactor evidence="1">
        <name>FAD</name>
        <dbReference type="ChEBI" id="CHEBI:57692"/>
    </cofactor>
</comment>
<comment type="pathway">
    <text>Amino-acid degradation; L-leucine degradation; (S)-3-hydroxy-3-methylglutaryl-CoA from 3-isovaleryl-CoA: step 1/3.</text>
</comment>
<comment type="subunit">
    <text evidence="1">Homodimer.</text>
</comment>
<comment type="subcellular location">
    <subcellularLocation>
        <location evidence="3">Mitochondrion</location>
    </subcellularLocation>
</comment>
<comment type="similarity">
    <text evidence="3">Belongs to the acyl-CoA dehydrogenase family.</text>
</comment>
<name>IVD_ORYSJ</name>
<dbReference type="EC" id="1.3.8.4"/>
<dbReference type="EMBL" id="AC129720">
    <property type="protein sequence ID" value="AAS90672.2"/>
    <property type="molecule type" value="Genomic_DNA"/>
</dbReference>
<dbReference type="EMBL" id="AC134931">
    <property type="protein sequence ID" value="AAT39231.1"/>
    <property type="molecule type" value="Genomic_DNA"/>
</dbReference>
<dbReference type="EMBL" id="AP008211">
    <property type="protein sequence ID" value="BAF16435.1"/>
    <property type="molecule type" value="Genomic_DNA"/>
</dbReference>
<dbReference type="EMBL" id="AP014961">
    <property type="protein sequence ID" value="BAS92064.1"/>
    <property type="molecule type" value="Genomic_DNA"/>
</dbReference>
<dbReference type="EMBL" id="CM000142">
    <property type="protein sequence ID" value="EEE62179.1"/>
    <property type="molecule type" value="Genomic_DNA"/>
</dbReference>
<dbReference type="EMBL" id="AK066314">
    <property type="protein sequence ID" value="BAG89906.1"/>
    <property type="molecule type" value="mRNA"/>
</dbReference>
<dbReference type="RefSeq" id="XP_015639342.1">
    <property type="nucleotide sequence ID" value="XM_015783856.1"/>
</dbReference>
<dbReference type="SMR" id="Q75IM9"/>
<dbReference type="FunCoup" id="Q75IM9">
    <property type="interactions" value="2870"/>
</dbReference>
<dbReference type="STRING" id="39947.Q75IM9"/>
<dbReference type="PaxDb" id="39947-Q75IM9"/>
<dbReference type="EnsemblPlants" id="Os05t0125500-01">
    <property type="protein sequence ID" value="Os05t0125500-01"/>
    <property type="gene ID" value="Os05g0125500"/>
</dbReference>
<dbReference type="Gramene" id="Os05t0125500-01">
    <property type="protein sequence ID" value="Os05t0125500-01"/>
    <property type="gene ID" value="Os05g0125500"/>
</dbReference>
<dbReference type="KEGG" id="dosa:Os05g0125500"/>
<dbReference type="eggNOG" id="KOG0141">
    <property type="taxonomic scope" value="Eukaryota"/>
</dbReference>
<dbReference type="HOGENOM" id="CLU_018204_0_1_1"/>
<dbReference type="InParanoid" id="Q75IM9"/>
<dbReference type="OMA" id="CFITNSG"/>
<dbReference type="OrthoDB" id="9988775at2759"/>
<dbReference type="PlantReactome" id="R-OSA-1119479">
    <property type="pathway name" value="Valine degradation"/>
</dbReference>
<dbReference type="UniPathway" id="UPA00363">
    <property type="reaction ID" value="UER00860"/>
</dbReference>
<dbReference type="Proteomes" id="UP000000763">
    <property type="component" value="Chromosome 5"/>
</dbReference>
<dbReference type="Proteomes" id="UP000007752">
    <property type="component" value="Chromosome 5"/>
</dbReference>
<dbReference type="Proteomes" id="UP000059680">
    <property type="component" value="Chromosome 5"/>
</dbReference>
<dbReference type="GO" id="GO:0005739">
    <property type="term" value="C:mitochondrion"/>
    <property type="evidence" value="ECO:0000318"/>
    <property type="project" value="GO_Central"/>
</dbReference>
<dbReference type="GO" id="GO:0008470">
    <property type="term" value="F:3-methylbutanoyl-CoA dehydrogenase activity"/>
    <property type="evidence" value="ECO:0000318"/>
    <property type="project" value="GO_Central"/>
</dbReference>
<dbReference type="GO" id="GO:0050660">
    <property type="term" value="F:flavin adenine dinucleotide binding"/>
    <property type="evidence" value="ECO:0007669"/>
    <property type="project" value="InterPro"/>
</dbReference>
<dbReference type="GO" id="GO:0006552">
    <property type="term" value="P:L-leucine catabolic process"/>
    <property type="evidence" value="ECO:0000318"/>
    <property type="project" value="GO_Central"/>
</dbReference>
<dbReference type="CDD" id="cd01156">
    <property type="entry name" value="IVD"/>
    <property type="match status" value="1"/>
</dbReference>
<dbReference type="FunFam" id="1.10.540.10:FF:000007">
    <property type="entry name" value="Isovaleryl-CoA dehydrogenase, mitochondrial"/>
    <property type="match status" value="1"/>
</dbReference>
<dbReference type="FunFam" id="2.40.110.10:FF:000004">
    <property type="entry name" value="Isovaleryl-CoA dehydrogenase, mitochondrial"/>
    <property type="match status" value="1"/>
</dbReference>
<dbReference type="FunFam" id="1.20.140.10:FF:000003">
    <property type="entry name" value="isovaleryl-CoA dehydrogenase, mitochondrial"/>
    <property type="match status" value="1"/>
</dbReference>
<dbReference type="Gene3D" id="1.10.540.10">
    <property type="entry name" value="Acyl-CoA dehydrogenase/oxidase, N-terminal domain"/>
    <property type="match status" value="1"/>
</dbReference>
<dbReference type="Gene3D" id="2.40.110.10">
    <property type="entry name" value="Butyryl-CoA Dehydrogenase, subunit A, domain 2"/>
    <property type="match status" value="1"/>
</dbReference>
<dbReference type="Gene3D" id="1.20.140.10">
    <property type="entry name" value="Butyryl-CoA Dehydrogenase, subunit A, domain 3"/>
    <property type="match status" value="1"/>
</dbReference>
<dbReference type="InterPro" id="IPR006089">
    <property type="entry name" value="Acyl-CoA_DH_CS"/>
</dbReference>
<dbReference type="InterPro" id="IPR006091">
    <property type="entry name" value="Acyl-CoA_Oxase/DH_mid-dom"/>
</dbReference>
<dbReference type="InterPro" id="IPR046373">
    <property type="entry name" value="Acyl-CoA_Oxase/DH_mid-dom_sf"/>
</dbReference>
<dbReference type="InterPro" id="IPR036250">
    <property type="entry name" value="AcylCo_DH-like_C"/>
</dbReference>
<dbReference type="InterPro" id="IPR009075">
    <property type="entry name" value="AcylCo_DH/oxidase_C"/>
</dbReference>
<dbReference type="InterPro" id="IPR013786">
    <property type="entry name" value="AcylCoA_DH/ox_N"/>
</dbReference>
<dbReference type="InterPro" id="IPR037069">
    <property type="entry name" value="AcylCoA_DH/ox_N_sf"/>
</dbReference>
<dbReference type="InterPro" id="IPR009100">
    <property type="entry name" value="AcylCoA_DH/oxidase_NM_dom_sf"/>
</dbReference>
<dbReference type="InterPro" id="IPR034183">
    <property type="entry name" value="IVD"/>
</dbReference>
<dbReference type="PANTHER" id="PTHR43884">
    <property type="entry name" value="ACYL-COA DEHYDROGENASE"/>
    <property type="match status" value="1"/>
</dbReference>
<dbReference type="PANTHER" id="PTHR43884:SF12">
    <property type="entry name" value="ISOVALERYL-COA DEHYDROGENASE, MITOCHONDRIAL-RELATED"/>
    <property type="match status" value="1"/>
</dbReference>
<dbReference type="Pfam" id="PF00441">
    <property type="entry name" value="Acyl-CoA_dh_1"/>
    <property type="match status" value="1"/>
</dbReference>
<dbReference type="Pfam" id="PF02770">
    <property type="entry name" value="Acyl-CoA_dh_M"/>
    <property type="match status" value="1"/>
</dbReference>
<dbReference type="Pfam" id="PF02771">
    <property type="entry name" value="Acyl-CoA_dh_N"/>
    <property type="match status" value="1"/>
</dbReference>
<dbReference type="PIRSF" id="PIRSF016578">
    <property type="entry name" value="HsaA"/>
    <property type="match status" value="1"/>
</dbReference>
<dbReference type="SUPFAM" id="SSF47203">
    <property type="entry name" value="Acyl-CoA dehydrogenase C-terminal domain-like"/>
    <property type="match status" value="1"/>
</dbReference>
<dbReference type="SUPFAM" id="SSF56645">
    <property type="entry name" value="Acyl-CoA dehydrogenase NM domain-like"/>
    <property type="match status" value="1"/>
</dbReference>
<dbReference type="PROSITE" id="PS00072">
    <property type="entry name" value="ACYL_COA_DH_1"/>
    <property type="match status" value="1"/>
</dbReference>
<dbReference type="PROSITE" id="PS00073">
    <property type="entry name" value="ACYL_COA_DH_2"/>
    <property type="match status" value="1"/>
</dbReference>
<evidence type="ECO:0000250" key="1"/>
<evidence type="ECO:0000250" key="2">
    <source>
        <dbReference type="UniProtKB" id="P26440"/>
    </source>
</evidence>
<evidence type="ECO:0000305" key="3"/>